<feature type="chain" id="PRO_1000025745" description="Chaperonin GroEL">
    <location>
        <begin position="1"/>
        <end position="549"/>
    </location>
</feature>
<feature type="binding site" evidence="1">
    <location>
        <begin position="30"/>
        <end position="33"/>
    </location>
    <ligand>
        <name>ATP</name>
        <dbReference type="ChEBI" id="CHEBI:30616"/>
    </ligand>
</feature>
<feature type="binding site" evidence="1">
    <location>
        <position position="51"/>
    </location>
    <ligand>
        <name>ATP</name>
        <dbReference type="ChEBI" id="CHEBI:30616"/>
    </ligand>
</feature>
<feature type="binding site" evidence="1">
    <location>
        <begin position="87"/>
        <end position="91"/>
    </location>
    <ligand>
        <name>ATP</name>
        <dbReference type="ChEBI" id="CHEBI:30616"/>
    </ligand>
</feature>
<feature type="binding site" evidence="1">
    <location>
        <position position="415"/>
    </location>
    <ligand>
        <name>ATP</name>
        <dbReference type="ChEBI" id="CHEBI:30616"/>
    </ligand>
</feature>
<feature type="binding site" evidence="1">
    <location>
        <position position="496"/>
    </location>
    <ligand>
        <name>ATP</name>
        <dbReference type="ChEBI" id="CHEBI:30616"/>
    </ligand>
</feature>
<dbReference type="EC" id="5.6.1.7" evidence="1"/>
<dbReference type="EMBL" id="CP000697">
    <property type="protein sequence ID" value="ABQ31694.1"/>
    <property type="molecule type" value="Genomic_DNA"/>
</dbReference>
<dbReference type="RefSeq" id="WP_007423234.1">
    <property type="nucleotide sequence ID" value="NC_009484.1"/>
</dbReference>
<dbReference type="SMR" id="A5G1G2"/>
<dbReference type="STRING" id="349163.Acry_2503"/>
<dbReference type="KEGG" id="acr:Acry_2503"/>
<dbReference type="eggNOG" id="COG0459">
    <property type="taxonomic scope" value="Bacteria"/>
</dbReference>
<dbReference type="HOGENOM" id="CLU_016503_3_0_5"/>
<dbReference type="Proteomes" id="UP000000245">
    <property type="component" value="Chromosome"/>
</dbReference>
<dbReference type="GO" id="GO:0005737">
    <property type="term" value="C:cytoplasm"/>
    <property type="evidence" value="ECO:0007669"/>
    <property type="project" value="UniProtKB-SubCell"/>
</dbReference>
<dbReference type="GO" id="GO:0005524">
    <property type="term" value="F:ATP binding"/>
    <property type="evidence" value="ECO:0007669"/>
    <property type="project" value="UniProtKB-UniRule"/>
</dbReference>
<dbReference type="GO" id="GO:0140662">
    <property type="term" value="F:ATP-dependent protein folding chaperone"/>
    <property type="evidence" value="ECO:0007669"/>
    <property type="project" value="InterPro"/>
</dbReference>
<dbReference type="GO" id="GO:0016853">
    <property type="term" value="F:isomerase activity"/>
    <property type="evidence" value="ECO:0007669"/>
    <property type="project" value="UniProtKB-KW"/>
</dbReference>
<dbReference type="GO" id="GO:0051082">
    <property type="term" value="F:unfolded protein binding"/>
    <property type="evidence" value="ECO:0007669"/>
    <property type="project" value="UniProtKB-UniRule"/>
</dbReference>
<dbReference type="GO" id="GO:0042026">
    <property type="term" value="P:protein refolding"/>
    <property type="evidence" value="ECO:0007669"/>
    <property type="project" value="UniProtKB-UniRule"/>
</dbReference>
<dbReference type="CDD" id="cd03344">
    <property type="entry name" value="GroEL"/>
    <property type="match status" value="1"/>
</dbReference>
<dbReference type="FunFam" id="1.10.560.10:FF:000001">
    <property type="entry name" value="60 kDa chaperonin"/>
    <property type="match status" value="1"/>
</dbReference>
<dbReference type="FunFam" id="3.50.7.10:FF:000001">
    <property type="entry name" value="60 kDa chaperonin"/>
    <property type="match status" value="1"/>
</dbReference>
<dbReference type="Gene3D" id="3.50.7.10">
    <property type="entry name" value="GroEL"/>
    <property type="match status" value="1"/>
</dbReference>
<dbReference type="Gene3D" id="1.10.560.10">
    <property type="entry name" value="GroEL-like equatorial domain"/>
    <property type="match status" value="1"/>
</dbReference>
<dbReference type="Gene3D" id="3.30.260.10">
    <property type="entry name" value="TCP-1-like chaperonin intermediate domain"/>
    <property type="match status" value="1"/>
</dbReference>
<dbReference type="HAMAP" id="MF_00600">
    <property type="entry name" value="CH60"/>
    <property type="match status" value="1"/>
</dbReference>
<dbReference type="InterPro" id="IPR018370">
    <property type="entry name" value="Chaperonin_Cpn60_CS"/>
</dbReference>
<dbReference type="InterPro" id="IPR001844">
    <property type="entry name" value="Cpn60/GroEL"/>
</dbReference>
<dbReference type="InterPro" id="IPR002423">
    <property type="entry name" value="Cpn60/GroEL/TCP-1"/>
</dbReference>
<dbReference type="InterPro" id="IPR027409">
    <property type="entry name" value="GroEL-like_apical_dom_sf"/>
</dbReference>
<dbReference type="InterPro" id="IPR027413">
    <property type="entry name" value="GROEL-like_equatorial_sf"/>
</dbReference>
<dbReference type="InterPro" id="IPR027410">
    <property type="entry name" value="TCP-1-like_intermed_sf"/>
</dbReference>
<dbReference type="NCBIfam" id="TIGR02348">
    <property type="entry name" value="GroEL"/>
    <property type="match status" value="1"/>
</dbReference>
<dbReference type="NCBIfam" id="NF000592">
    <property type="entry name" value="PRK00013.1"/>
    <property type="match status" value="1"/>
</dbReference>
<dbReference type="NCBIfam" id="NF009487">
    <property type="entry name" value="PRK12849.1"/>
    <property type="match status" value="1"/>
</dbReference>
<dbReference type="NCBIfam" id="NF009488">
    <property type="entry name" value="PRK12850.1"/>
    <property type="match status" value="1"/>
</dbReference>
<dbReference type="NCBIfam" id="NF009489">
    <property type="entry name" value="PRK12851.1"/>
    <property type="match status" value="1"/>
</dbReference>
<dbReference type="PANTHER" id="PTHR45633">
    <property type="entry name" value="60 KDA HEAT SHOCK PROTEIN, MITOCHONDRIAL"/>
    <property type="match status" value="1"/>
</dbReference>
<dbReference type="Pfam" id="PF00118">
    <property type="entry name" value="Cpn60_TCP1"/>
    <property type="match status" value="1"/>
</dbReference>
<dbReference type="PRINTS" id="PR00298">
    <property type="entry name" value="CHAPERONIN60"/>
</dbReference>
<dbReference type="SUPFAM" id="SSF52029">
    <property type="entry name" value="GroEL apical domain-like"/>
    <property type="match status" value="1"/>
</dbReference>
<dbReference type="SUPFAM" id="SSF48592">
    <property type="entry name" value="GroEL equatorial domain-like"/>
    <property type="match status" value="1"/>
</dbReference>
<dbReference type="SUPFAM" id="SSF54849">
    <property type="entry name" value="GroEL-intermediate domain like"/>
    <property type="match status" value="1"/>
</dbReference>
<dbReference type="PROSITE" id="PS00296">
    <property type="entry name" value="CHAPERONINS_CPN60"/>
    <property type="match status" value="1"/>
</dbReference>
<keyword id="KW-0067">ATP-binding</keyword>
<keyword id="KW-0143">Chaperone</keyword>
<keyword id="KW-0963">Cytoplasm</keyword>
<keyword id="KW-0413">Isomerase</keyword>
<keyword id="KW-0547">Nucleotide-binding</keyword>
<keyword id="KW-1185">Reference proteome</keyword>
<sequence>MAAKDVRFSADARERLIRGVDLLANAVKVTLGPKGRNVVIEKSFGSPRITKDGVTVAKEIELADKFENMGAQMVREVASKTNDLAGDGTTTATVLAQAIVREGAKAVAAGMNPMDLKRGIDKAVNAIVDELKKRTKKITTPSETAQVGTISANGEAEIGKMISEAMQKVGNEGVITVEEAKGIQTELDVVEGMQFDRGYVSPYFITNPEKMVADLDNPYILIHEKKLSGLQPMLPLLESIVQSGKPLLIIAEDVEGEALATLVVNKLRGGLKIAAVKAPGFGDRRKAMLEDIAILTGGQVISEDLGIKLETVTLNMLGRAKKVLIEKENTTIVEGAGKKADITGRCNQIRAQIEETTSDYDREKLQERLAKLAGGVAVIRVGGASETEVKERKDRVDDALHATRAAVEEGIVPGGGVALARASLAINKLKADNDDQRFGIDIIRKAVLAPMRQIAENAGEDGAVISGKVLDNDDYSFGFDAQSGEFKDMVKAGIIDPTKVVRTALQDAASVAGLLITTEAMVAERPEKKAPAGGDAGMGGMGGMGGMDF</sequence>
<evidence type="ECO:0000255" key="1">
    <source>
        <dbReference type="HAMAP-Rule" id="MF_00600"/>
    </source>
</evidence>
<comment type="function">
    <text evidence="1">Together with its co-chaperonin GroES, plays an essential role in assisting protein folding. The GroEL-GroES system forms a nano-cage that allows encapsulation of the non-native substrate proteins and provides a physical environment optimized to promote and accelerate protein folding.</text>
</comment>
<comment type="catalytic activity">
    <reaction evidence="1">
        <text>ATP + H2O + a folded polypeptide = ADP + phosphate + an unfolded polypeptide.</text>
        <dbReference type="EC" id="5.6.1.7"/>
    </reaction>
</comment>
<comment type="subunit">
    <text evidence="1">Forms a cylinder of 14 subunits composed of two heptameric rings stacked back-to-back. Interacts with the co-chaperonin GroES.</text>
</comment>
<comment type="subcellular location">
    <subcellularLocation>
        <location evidence="1">Cytoplasm</location>
    </subcellularLocation>
</comment>
<comment type="similarity">
    <text evidence="1">Belongs to the chaperonin (HSP60) family.</text>
</comment>
<reference key="1">
    <citation type="submission" date="2007-05" db="EMBL/GenBank/DDBJ databases">
        <title>Complete sequence of chromosome of Acidiphilium cryptum JF-5.</title>
        <authorList>
            <consortium name="US DOE Joint Genome Institute"/>
            <person name="Copeland A."/>
            <person name="Lucas S."/>
            <person name="Lapidus A."/>
            <person name="Barry K."/>
            <person name="Detter J.C."/>
            <person name="Glavina del Rio T."/>
            <person name="Hammon N."/>
            <person name="Israni S."/>
            <person name="Dalin E."/>
            <person name="Tice H."/>
            <person name="Pitluck S."/>
            <person name="Sims D."/>
            <person name="Brettin T."/>
            <person name="Bruce D."/>
            <person name="Han C."/>
            <person name="Schmutz J."/>
            <person name="Larimer F."/>
            <person name="Land M."/>
            <person name="Hauser L."/>
            <person name="Kyrpides N."/>
            <person name="Kim E."/>
            <person name="Magnuson T."/>
            <person name="Richardson P."/>
        </authorList>
    </citation>
    <scope>NUCLEOTIDE SEQUENCE [LARGE SCALE GENOMIC DNA]</scope>
    <source>
        <strain>JF-5</strain>
    </source>
</reference>
<organism>
    <name type="scientific">Acidiphilium cryptum (strain JF-5)</name>
    <dbReference type="NCBI Taxonomy" id="349163"/>
    <lineage>
        <taxon>Bacteria</taxon>
        <taxon>Pseudomonadati</taxon>
        <taxon>Pseudomonadota</taxon>
        <taxon>Alphaproteobacteria</taxon>
        <taxon>Acetobacterales</taxon>
        <taxon>Acidocellaceae</taxon>
        <taxon>Acidiphilium</taxon>
    </lineage>
</organism>
<accession>A5G1G2</accession>
<proteinExistence type="inferred from homology"/>
<protein>
    <recommendedName>
        <fullName evidence="1">Chaperonin GroEL</fullName>
        <ecNumber evidence="1">5.6.1.7</ecNumber>
    </recommendedName>
    <alternativeName>
        <fullName evidence="1">60 kDa chaperonin</fullName>
    </alternativeName>
    <alternativeName>
        <fullName evidence="1">Chaperonin-60</fullName>
        <shortName evidence="1">Cpn60</shortName>
    </alternativeName>
</protein>
<gene>
    <name evidence="1" type="primary">groEL</name>
    <name evidence="1" type="synonym">groL</name>
    <name type="ordered locus">Acry_2503</name>
</gene>
<name>CH60_ACICJ</name>